<name>RL22_BURL3</name>
<evidence type="ECO:0000255" key="1">
    <source>
        <dbReference type="HAMAP-Rule" id="MF_01331"/>
    </source>
</evidence>
<evidence type="ECO:0000305" key="2"/>
<organism>
    <name type="scientific">Burkholderia lata (strain ATCC 17760 / DSM 23089 / LMG 22485 / NCIMB 9086 / R18194 / 383)</name>
    <dbReference type="NCBI Taxonomy" id="482957"/>
    <lineage>
        <taxon>Bacteria</taxon>
        <taxon>Pseudomonadati</taxon>
        <taxon>Pseudomonadota</taxon>
        <taxon>Betaproteobacteria</taxon>
        <taxon>Burkholderiales</taxon>
        <taxon>Burkholderiaceae</taxon>
        <taxon>Burkholderia</taxon>
        <taxon>Burkholderia cepacia complex</taxon>
    </lineage>
</organism>
<dbReference type="EMBL" id="CP000151">
    <property type="protein sequence ID" value="ABB07054.1"/>
    <property type="molecule type" value="Genomic_DNA"/>
</dbReference>
<dbReference type="RefSeq" id="WP_004199272.1">
    <property type="nucleotide sequence ID" value="NZ_WNDV01000034.1"/>
</dbReference>
<dbReference type="SMR" id="Q39KG2"/>
<dbReference type="GeneID" id="98107155"/>
<dbReference type="KEGG" id="bur:Bcep18194_A3452"/>
<dbReference type="HOGENOM" id="CLU_083987_3_3_4"/>
<dbReference type="Proteomes" id="UP000002705">
    <property type="component" value="Chromosome 1"/>
</dbReference>
<dbReference type="GO" id="GO:0022625">
    <property type="term" value="C:cytosolic large ribosomal subunit"/>
    <property type="evidence" value="ECO:0007669"/>
    <property type="project" value="TreeGrafter"/>
</dbReference>
<dbReference type="GO" id="GO:0019843">
    <property type="term" value="F:rRNA binding"/>
    <property type="evidence" value="ECO:0007669"/>
    <property type="project" value="UniProtKB-UniRule"/>
</dbReference>
<dbReference type="GO" id="GO:0003735">
    <property type="term" value="F:structural constituent of ribosome"/>
    <property type="evidence" value="ECO:0007669"/>
    <property type="project" value="InterPro"/>
</dbReference>
<dbReference type="GO" id="GO:0006412">
    <property type="term" value="P:translation"/>
    <property type="evidence" value="ECO:0007669"/>
    <property type="project" value="UniProtKB-UniRule"/>
</dbReference>
<dbReference type="CDD" id="cd00336">
    <property type="entry name" value="Ribosomal_L22"/>
    <property type="match status" value="1"/>
</dbReference>
<dbReference type="FunFam" id="3.90.470.10:FF:000001">
    <property type="entry name" value="50S ribosomal protein L22"/>
    <property type="match status" value="1"/>
</dbReference>
<dbReference type="Gene3D" id="3.90.470.10">
    <property type="entry name" value="Ribosomal protein L22/L17"/>
    <property type="match status" value="1"/>
</dbReference>
<dbReference type="HAMAP" id="MF_01331_B">
    <property type="entry name" value="Ribosomal_uL22_B"/>
    <property type="match status" value="1"/>
</dbReference>
<dbReference type="InterPro" id="IPR001063">
    <property type="entry name" value="Ribosomal_uL22"/>
</dbReference>
<dbReference type="InterPro" id="IPR005727">
    <property type="entry name" value="Ribosomal_uL22_bac/chlpt-type"/>
</dbReference>
<dbReference type="InterPro" id="IPR047867">
    <property type="entry name" value="Ribosomal_uL22_bac/org-type"/>
</dbReference>
<dbReference type="InterPro" id="IPR018260">
    <property type="entry name" value="Ribosomal_uL22_CS"/>
</dbReference>
<dbReference type="InterPro" id="IPR036394">
    <property type="entry name" value="Ribosomal_uL22_sf"/>
</dbReference>
<dbReference type="NCBIfam" id="TIGR01044">
    <property type="entry name" value="rplV_bact"/>
    <property type="match status" value="1"/>
</dbReference>
<dbReference type="PANTHER" id="PTHR13501">
    <property type="entry name" value="CHLOROPLAST 50S RIBOSOMAL PROTEIN L22-RELATED"/>
    <property type="match status" value="1"/>
</dbReference>
<dbReference type="PANTHER" id="PTHR13501:SF8">
    <property type="entry name" value="LARGE RIBOSOMAL SUBUNIT PROTEIN UL22M"/>
    <property type="match status" value="1"/>
</dbReference>
<dbReference type="Pfam" id="PF00237">
    <property type="entry name" value="Ribosomal_L22"/>
    <property type="match status" value="1"/>
</dbReference>
<dbReference type="SUPFAM" id="SSF54843">
    <property type="entry name" value="Ribosomal protein L22"/>
    <property type="match status" value="1"/>
</dbReference>
<dbReference type="PROSITE" id="PS00464">
    <property type="entry name" value="RIBOSOMAL_L22"/>
    <property type="match status" value="1"/>
</dbReference>
<comment type="function">
    <text evidence="1">This protein binds specifically to 23S rRNA; its binding is stimulated by other ribosomal proteins, e.g. L4, L17, and L20. It is important during the early stages of 50S assembly. It makes multiple contacts with different domains of the 23S rRNA in the assembled 50S subunit and ribosome (By similarity).</text>
</comment>
<comment type="function">
    <text evidence="1">The globular domain of the protein is located near the polypeptide exit tunnel on the outside of the subunit, while an extended beta-hairpin is found that lines the wall of the exit tunnel in the center of the 70S ribosome.</text>
</comment>
<comment type="subunit">
    <text evidence="1">Part of the 50S ribosomal subunit.</text>
</comment>
<comment type="similarity">
    <text evidence="1">Belongs to the universal ribosomal protein uL22 family.</text>
</comment>
<feature type="chain" id="PRO_0000243133" description="Large ribosomal subunit protein uL22">
    <location>
        <begin position="1"/>
        <end position="109"/>
    </location>
</feature>
<accession>Q39KG2</accession>
<keyword id="KW-0687">Ribonucleoprotein</keyword>
<keyword id="KW-0689">Ribosomal protein</keyword>
<keyword id="KW-0694">RNA-binding</keyword>
<keyword id="KW-0699">rRNA-binding</keyword>
<reference key="1">
    <citation type="submission" date="2005-10" db="EMBL/GenBank/DDBJ databases">
        <title>Complete sequence of chromosome 1 of Burkholderia sp. 383.</title>
        <authorList>
            <consortium name="US DOE Joint Genome Institute"/>
            <person name="Copeland A."/>
            <person name="Lucas S."/>
            <person name="Lapidus A."/>
            <person name="Barry K."/>
            <person name="Detter J.C."/>
            <person name="Glavina T."/>
            <person name="Hammon N."/>
            <person name="Israni S."/>
            <person name="Pitluck S."/>
            <person name="Chain P."/>
            <person name="Malfatti S."/>
            <person name="Shin M."/>
            <person name="Vergez L."/>
            <person name="Schmutz J."/>
            <person name="Larimer F."/>
            <person name="Land M."/>
            <person name="Kyrpides N."/>
            <person name="Lykidis A."/>
            <person name="Richardson P."/>
        </authorList>
    </citation>
    <scope>NUCLEOTIDE SEQUENCE [LARGE SCALE GENOMIC DNA]</scope>
    <source>
        <strain>ATCC 17760 / DSM 23089 / LMG 22485 / NCIMB 9086 / R18194 / 383</strain>
    </source>
</reference>
<gene>
    <name evidence="1" type="primary">rplV</name>
    <name type="ordered locus">Bcep18194_A3452</name>
</gene>
<sequence length="109" mass="11816">MEVKAIHRGARISAQKTRLVADQIRGLPVDKALNVLTFSPKKAAGIVKKVVLSAIANAEHNEGADIDELKIKSIYVDKAASLKRFTARAKGRGNRIEKQSCHITVTVGN</sequence>
<protein>
    <recommendedName>
        <fullName evidence="1">Large ribosomal subunit protein uL22</fullName>
    </recommendedName>
    <alternativeName>
        <fullName evidence="2">50S ribosomal protein L22</fullName>
    </alternativeName>
</protein>
<proteinExistence type="inferred from homology"/>